<protein>
    <recommendedName>
        <fullName evidence="1">DNA replication and repair protein RecF</fullName>
    </recommendedName>
</protein>
<comment type="function">
    <text evidence="1">The RecF protein is involved in DNA metabolism; it is required for DNA replication and normal SOS inducibility. RecF binds preferentially to single-stranded, linear DNA. It also seems to bind ATP.</text>
</comment>
<comment type="subcellular location">
    <subcellularLocation>
        <location evidence="1">Cytoplasm</location>
    </subcellularLocation>
</comment>
<comment type="similarity">
    <text evidence="1">Belongs to the RecF family.</text>
</comment>
<sequence length="364" mass="40637">MLIRRLALHQLRRFSAVDLSPQPGLNLLTGDNGAGKTSVLEALHLMAYGRSFRGRVRDGLVRQGQEALEIFVEWDEQRADHPPHRRKAGLRHSGQDWKGRLDGEDVAQLGNLCAALAVVTFEPGSHALVSGGGEPRRRFLDWGLFHVEPDFLSLWRRYSRALKQRNALLKQGGPSRMLDTWDHELAEAGEPLTSRRQHYLERLQQRTVALAASLAPQLGIQGLELSPGWRRHELPLADALLLARERDRQAGYTSVGPHRADWSVDFHSIPGRDALSRGQAKLTALACLLAQAEDYAEQRGEWPVIALDDLASELDRTHQARVLERLLNGPAQIFITATETPAALLDLTHIARFHVEHAQIVAVP</sequence>
<gene>
    <name evidence="1" type="primary">recF</name>
    <name type="ordered locus">Smlt0004</name>
</gene>
<accession>B2FT82</accession>
<dbReference type="EMBL" id="AM743169">
    <property type="protein sequence ID" value="CAQ43622.1"/>
    <property type="molecule type" value="Genomic_DNA"/>
</dbReference>
<dbReference type="RefSeq" id="WP_012478628.1">
    <property type="nucleotide sequence ID" value="NC_010943.1"/>
</dbReference>
<dbReference type="SMR" id="B2FT82"/>
<dbReference type="EnsemblBacteria" id="CAQ43622">
    <property type="protein sequence ID" value="CAQ43622"/>
    <property type="gene ID" value="Smlt0004"/>
</dbReference>
<dbReference type="KEGG" id="sml:Smlt0004"/>
<dbReference type="PATRIC" id="fig|522373.3.peg.3"/>
<dbReference type="eggNOG" id="COG1195">
    <property type="taxonomic scope" value="Bacteria"/>
</dbReference>
<dbReference type="HOGENOM" id="CLU_040267_0_0_6"/>
<dbReference type="Proteomes" id="UP000008840">
    <property type="component" value="Chromosome"/>
</dbReference>
<dbReference type="GO" id="GO:0005737">
    <property type="term" value="C:cytoplasm"/>
    <property type="evidence" value="ECO:0007669"/>
    <property type="project" value="UniProtKB-SubCell"/>
</dbReference>
<dbReference type="GO" id="GO:0005524">
    <property type="term" value="F:ATP binding"/>
    <property type="evidence" value="ECO:0007669"/>
    <property type="project" value="UniProtKB-UniRule"/>
</dbReference>
<dbReference type="GO" id="GO:0003697">
    <property type="term" value="F:single-stranded DNA binding"/>
    <property type="evidence" value="ECO:0007669"/>
    <property type="project" value="UniProtKB-UniRule"/>
</dbReference>
<dbReference type="GO" id="GO:0006260">
    <property type="term" value="P:DNA replication"/>
    <property type="evidence" value="ECO:0007669"/>
    <property type="project" value="UniProtKB-UniRule"/>
</dbReference>
<dbReference type="GO" id="GO:0000731">
    <property type="term" value="P:DNA synthesis involved in DNA repair"/>
    <property type="evidence" value="ECO:0007669"/>
    <property type="project" value="TreeGrafter"/>
</dbReference>
<dbReference type="GO" id="GO:0006302">
    <property type="term" value="P:double-strand break repair"/>
    <property type="evidence" value="ECO:0007669"/>
    <property type="project" value="TreeGrafter"/>
</dbReference>
<dbReference type="GO" id="GO:0009432">
    <property type="term" value="P:SOS response"/>
    <property type="evidence" value="ECO:0007669"/>
    <property type="project" value="UniProtKB-UniRule"/>
</dbReference>
<dbReference type="Gene3D" id="3.40.50.300">
    <property type="entry name" value="P-loop containing nucleotide triphosphate hydrolases"/>
    <property type="match status" value="1"/>
</dbReference>
<dbReference type="Gene3D" id="1.20.1050.90">
    <property type="entry name" value="RecF/RecN/SMC, N-terminal domain"/>
    <property type="match status" value="1"/>
</dbReference>
<dbReference type="HAMAP" id="MF_00365">
    <property type="entry name" value="RecF"/>
    <property type="match status" value="1"/>
</dbReference>
<dbReference type="InterPro" id="IPR001238">
    <property type="entry name" value="DNA-binding_RecF"/>
</dbReference>
<dbReference type="InterPro" id="IPR018078">
    <property type="entry name" value="DNA-binding_RecF_CS"/>
</dbReference>
<dbReference type="InterPro" id="IPR027417">
    <property type="entry name" value="P-loop_NTPase"/>
</dbReference>
<dbReference type="InterPro" id="IPR003395">
    <property type="entry name" value="RecF/RecN/SMC_N"/>
</dbReference>
<dbReference type="InterPro" id="IPR042174">
    <property type="entry name" value="RecF_2"/>
</dbReference>
<dbReference type="NCBIfam" id="TIGR00611">
    <property type="entry name" value="recf"/>
    <property type="match status" value="1"/>
</dbReference>
<dbReference type="PANTHER" id="PTHR32182">
    <property type="entry name" value="DNA REPLICATION AND REPAIR PROTEIN RECF"/>
    <property type="match status" value="1"/>
</dbReference>
<dbReference type="PANTHER" id="PTHR32182:SF0">
    <property type="entry name" value="DNA REPLICATION AND REPAIR PROTEIN RECF"/>
    <property type="match status" value="1"/>
</dbReference>
<dbReference type="Pfam" id="PF02463">
    <property type="entry name" value="SMC_N"/>
    <property type="match status" value="1"/>
</dbReference>
<dbReference type="SUPFAM" id="SSF52540">
    <property type="entry name" value="P-loop containing nucleoside triphosphate hydrolases"/>
    <property type="match status" value="1"/>
</dbReference>
<dbReference type="PROSITE" id="PS00617">
    <property type="entry name" value="RECF_1"/>
    <property type="match status" value="1"/>
</dbReference>
<dbReference type="PROSITE" id="PS00618">
    <property type="entry name" value="RECF_2"/>
    <property type="match status" value="1"/>
</dbReference>
<proteinExistence type="inferred from homology"/>
<reference key="1">
    <citation type="journal article" date="2008" name="Genome Biol.">
        <title>The complete genome, comparative and functional analysis of Stenotrophomonas maltophilia reveals an organism heavily shielded by drug resistance determinants.</title>
        <authorList>
            <person name="Crossman L.C."/>
            <person name="Gould V.C."/>
            <person name="Dow J.M."/>
            <person name="Vernikos G.S."/>
            <person name="Okazaki A."/>
            <person name="Sebaihia M."/>
            <person name="Saunders D."/>
            <person name="Arrowsmith C."/>
            <person name="Carver T."/>
            <person name="Peters N."/>
            <person name="Adlem E."/>
            <person name="Kerhornou A."/>
            <person name="Lord A."/>
            <person name="Murphy L."/>
            <person name="Seeger K."/>
            <person name="Squares R."/>
            <person name="Rutter S."/>
            <person name="Quail M.A."/>
            <person name="Rajandream M.A."/>
            <person name="Harris D."/>
            <person name="Churcher C."/>
            <person name="Bentley S.D."/>
            <person name="Parkhill J."/>
            <person name="Thomson N.R."/>
            <person name="Avison M.B."/>
        </authorList>
    </citation>
    <scope>NUCLEOTIDE SEQUENCE [LARGE SCALE GENOMIC DNA]</scope>
    <source>
        <strain>K279a</strain>
    </source>
</reference>
<evidence type="ECO:0000255" key="1">
    <source>
        <dbReference type="HAMAP-Rule" id="MF_00365"/>
    </source>
</evidence>
<feature type="chain" id="PRO_1000121160" description="DNA replication and repair protein RecF">
    <location>
        <begin position="1"/>
        <end position="364"/>
    </location>
</feature>
<feature type="binding site" evidence="1">
    <location>
        <begin position="30"/>
        <end position="37"/>
    </location>
    <ligand>
        <name>ATP</name>
        <dbReference type="ChEBI" id="CHEBI:30616"/>
    </ligand>
</feature>
<keyword id="KW-0067">ATP-binding</keyword>
<keyword id="KW-0963">Cytoplasm</keyword>
<keyword id="KW-0227">DNA damage</keyword>
<keyword id="KW-0234">DNA repair</keyword>
<keyword id="KW-0235">DNA replication</keyword>
<keyword id="KW-0238">DNA-binding</keyword>
<keyword id="KW-0547">Nucleotide-binding</keyword>
<keyword id="KW-1185">Reference proteome</keyword>
<keyword id="KW-0742">SOS response</keyword>
<organism>
    <name type="scientific">Stenotrophomonas maltophilia (strain K279a)</name>
    <dbReference type="NCBI Taxonomy" id="522373"/>
    <lineage>
        <taxon>Bacteria</taxon>
        <taxon>Pseudomonadati</taxon>
        <taxon>Pseudomonadota</taxon>
        <taxon>Gammaproteobacteria</taxon>
        <taxon>Lysobacterales</taxon>
        <taxon>Lysobacteraceae</taxon>
        <taxon>Stenotrophomonas</taxon>
        <taxon>Stenotrophomonas maltophilia group</taxon>
    </lineage>
</organism>
<name>RECF_STRMK</name>